<dbReference type="EC" id="7.4.2.-"/>
<dbReference type="EMBL" id="CP000709">
    <property type="protein sequence ID" value="ABQ62879.1"/>
    <property type="molecule type" value="Genomic_DNA"/>
</dbReference>
<dbReference type="RefSeq" id="WP_006015588.1">
    <property type="nucleotide sequence ID" value="NC_009504.1"/>
</dbReference>
<dbReference type="SMR" id="A5VU87"/>
<dbReference type="GeneID" id="45125755"/>
<dbReference type="KEGG" id="bov:BOV_A0348"/>
<dbReference type="HOGENOM" id="CLU_000604_1_23_5"/>
<dbReference type="PhylomeDB" id="A5VU87"/>
<dbReference type="Proteomes" id="UP000006383">
    <property type="component" value="Chromosome II"/>
</dbReference>
<dbReference type="GO" id="GO:0005886">
    <property type="term" value="C:plasma membrane"/>
    <property type="evidence" value="ECO:0007669"/>
    <property type="project" value="UniProtKB-SubCell"/>
</dbReference>
<dbReference type="GO" id="GO:0005524">
    <property type="term" value="F:ATP binding"/>
    <property type="evidence" value="ECO:0007669"/>
    <property type="project" value="UniProtKB-KW"/>
</dbReference>
<dbReference type="GO" id="GO:0016887">
    <property type="term" value="F:ATP hydrolysis activity"/>
    <property type="evidence" value="ECO:0007669"/>
    <property type="project" value="InterPro"/>
</dbReference>
<dbReference type="GO" id="GO:0015833">
    <property type="term" value="P:peptide transport"/>
    <property type="evidence" value="ECO:0007669"/>
    <property type="project" value="UniProtKB-KW"/>
</dbReference>
<dbReference type="GO" id="GO:0015031">
    <property type="term" value="P:protein transport"/>
    <property type="evidence" value="ECO:0007669"/>
    <property type="project" value="UniProtKB-KW"/>
</dbReference>
<dbReference type="CDD" id="cd03257">
    <property type="entry name" value="ABC_NikE_OppD_transporters"/>
    <property type="match status" value="1"/>
</dbReference>
<dbReference type="FunFam" id="3.40.50.300:FF:000016">
    <property type="entry name" value="Oligopeptide ABC transporter ATP-binding component"/>
    <property type="match status" value="1"/>
</dbReference>
<dbReference type="Gene3D" id="3.40.50.300">
    <property type="entry name" value="P-loop containing nucleotide triphosphate hydrolases"/>
    <property type="match status" value="1"/>
</dbReference>
<dbReference type="InterPro" id="IPR003593">
    <property type="entry name" value="AAA+_ATPase"/>
</dbReference>
<dbReference type="InterPro" id="IPR050388">
    <property type="entry name" value="ABC_Ni/Peptide_Import"/>
</dbReference>
<dbReference type="InterPro" id="IPR003439">
    <property type="entry name" value="ABC_transporter-like_ATP-bd"/>
</dbReference>
<dbReference type="InterPro" id="IPR017871">
    <property type="entry name" value="ABC_transporter-like_CS"/>
</dbReference>
<dbReference type="InterPro" id="IPR013563">
    <property type="entry name" value="Oligopep_ABC_C"/>
</dbReference>
<dbReference type="InterPro" id="IPR027417">
    <property type="entry name" value="P-loop_NTPase"/>
</dbReference>
<dbReference type="NCBIfam" id="TIGR01727">
    <property type="entry name" value="oligo_HPY"/>
    <property type="match status" value="1"/>
</dbReference>
<dbReference type="PANTHER" id="PTHR43297:SF14">
    <property type="entry name" value="ATPASE AAA-TYPE CORE DOMAIN-CONTAINING PROTEIN"/>
    <property type="match status" value="1"/>
</dbReference>
<dbReference type="PANTHER" id="PTHR43297">
    <property type="entry name" value="OLIGOPEPTIDE TRANSPORT ATP-BINDING PROTEIN APPD"/>
    <property type="match status" value="1"/>
</dbReference>
<dbReference type="Pfam" id="PF00005">
    <property type="entry name" value="ABC_tran"/>
    <property type="match status" value="1"/>
</dbReference>
<dbReference type="Pfam" id="PF08352">
    <property type="entry name" value="oligo_HPY"/>
    <property type="match status" value="1"/>
</dbReference>
<dbReference type="SMART" id="SM00382">
    <property type="entry name" value="AAA"/>
    <property type="match status" value="1"/>
</dbReference>
<dbReference type="SUPFAM" id="SSF52540">
    <property type="entry name" value="P-loop containing nucleoside triphosphate hydrolases"/>
    <property type="match status" value="1"/>
</dbReference>
<dbReference type="PROSITE" id="PS00211">
    <property type="entry name" value="ABC_TRANSPORTER_1"/>
    <property type="match status" value="1"/>
</dbReference>
<dbReference type="PROSITE" id="PS50893">
    <property type="entry name" value="ABC_TRANSPORTER_2"/>
    <property type="match status" value="1"/>
</dbReference>
<organism>
    <name type="scientific">Brucella ovis (strain ATCC 25840 / 63/290 / NCTC 10512)</name>
    <dbReference type="NCBI Taxonomy" id="444178"/>
    <lineage>
        <taxon>Bacteria</taxon>
        <taxon>Pseudomonadati</taxon>
        <taxon>Pseudomonadota</taxon>
        <taxon>Alphaproteobacteria</taxon>
        <taxon>Hyphomicrobiales</taxon>
        <taxon>Brucellaceae</taxon>
        <taxon>Brucella/Ochrobactrum group</taxon>
        <taxon>Brucella</taxon>
    </lineage>
</organism>
<accession>A5VU87</accession>
<name>Y2548_BRUO2</name>
<sequence>MSRQPILDIKGLRTVFRTRAREIVAVNDVDIVVNPGETVALVGESGSGKSVTSLSIMRLLARKVGFIDAGSIILRGKSGQTVDLAAIDEEAMRRIRGNDIGMVFQEPMTSLNPVYTIGDQIGEPLRVHRGTSRREALEAVVELLDRVGIPDARRRAGQYPHELSGGMRQRATIAMALICNPTLLIADEPTTALDVTIQAQILDLMQKLQSESGMGMLFVTHNLGVVAEIAQRVVVMYAGRIVESGPVKEVFRNPRHPYTMGLLRSMPRLGDATEMKRRGEKLNTIPGMVPGLANLPSGCAFAPRCSFAVEACHAAVPPLASVNEHHGSRCIRWQEIAA</sequence>
<feature type="chain" id="PRO_0000328700" description="Putative peptide import ATP-binding protein BOV_A0348">
    <location>
        <begin position="1"/>
        <end position="338"/>
    </location>
</feature>
<feature type="domain" description="ABC transporter" evidence="2">
    <location>
        <begin position="10"/>
        <end position="263"/>
    </location>
</feature>
<feature type="binding site" evidence="2">
    <location>
        <begin position="43"/>
        <end position="50"/>
    </location>
    <ligand>
        <name>ATP</name>
        <dbReference type="ChEBI" id="CHEBI:30616"/>
    </ligand>
</feature>
<evidence type="ECO:0000250" key="1"/>
<evidence type="ECO:0000255" key="2">
    <source>
        <dbReference type="PROSITE-ProRule" id="PRU00434"/>
    </source>
</evidence>
<evidence type="ECO:0000305" key="3"/>
<keyword id="KW-0067">ATP-binding</keyword>
<keyword id="KW-0997">Cell inner membrane</keyword>
<keyword id="KW-1003">Cell membrane</keyword>
<keyword id="KW-0472">Membrane</keyword>
<keyword id="KW-0547">Nucleotide-binding</keyword>
<keyword id="KW-0571">Peptide transport</keyword>
<keyword id="KW-0653">Protein transport</keyword>
<keyword id="KW-1278">Translocase</keyword>
<keyword id="KW-0813">Transport</keyword>
<gene>
    <name type="ordered locus">BOV_A0348</name>
</gene>
<reference key="1">
    <citation type="journal article" date="2009" name="PLoS ONE">
        <title>Genome degradation in Brucella ovis corresponds with narrowing of its host range and tissue tropism.</title>
        <authorList>
            <person name="Tsolis R.M."/>
            <person name="Seshadri R."/>
            <person name="Santos R.L."/>
            <person name="Sangari F.J."/>
            <person name="Lobo J.M."/>
            <person name="de Jong M.F."/>
            <person name="Ren Q."/>
            <person name="Myers G."/>
            <person name="Brinkac L.M."/>
            <person name="Nelson W.C."/>
            <person name="Deboy R.T."/>
            <person name="Angiuoli S."/>
            <person name="Khouri H."/>
            <person name="Dimitrov G."/>
            <person name="Robinson J.R."/>
            <person name="Mulligan S."/>
            <person name="Walker R.L."/>
            <person name="Elzer P.E."/>
            <person name="Hassan K.A."/>
            <person name="Paulsen I.T."/>
        </authorList>
    </citation>
    <scope>NUCLEOTIDE SEQUENCE [LARGE SCALE GENOMIC DNA]</scope>
    <source>
        <strain>ATCC 25840 / 63/290 / NCTC 10512</strain>
    </source>
</reference>
<protein>
    <recommendedName>
        <fullName>Putative peptide import ATP-binding protein BOV_A0348</fullName>
        <ecNumber>7.4.2.-</ecNumber>
    </recommendedName>
</protein>
<proteinExistence type="inferred from homology"/>
<comment type="function">
    <text evidence="1">Probably part of an ABC transporter complex that could be involved in peptide import. Probably responsible for energy coupling to the transport system (By similarity).</text>
</comment>
<comment type="subunit">
    <text evidence="3">The complex is composed of two ATP-binding proteins (BOV_A0347 and BOV_A0348), two transmembrane proteins (BOV_A0350 and BOV_A0351) and a solute-binding protein (BOV_A0352).</text>
</comment>
<comment type="subcellular location">
    <subcellularLocation>
        <location evidence="3">Cell inner membrane</location>
        <topology evidence="3">Peripheral membrane protein</topology>
    </subcellularLocation>
</comment>
<comment type="similarity">
    <text evidence="3">Belongs to the ABC transporter superfamily.</text>
</comment>